<evidence type="ECO:0000255" key="1">
    <source>
        <dbReference type="HAMAP-Rule" id="MF_01229"/>
    </source>
</evidence>
<accession>A7FDL9</accession>
<proteinExistence type="inferred from homology"/>
<keyword id="KW-0285">Flavoprotein</keyword>
<keyword id="KW-0288">FMN</keyword>
<keyword id="KW-0503">Monooxygenase</keyword>
<keyword id="KW-0560">Oxidoreductase</keyword>
<comment type="function">
    <text evidence="1">Catalyzes the desulfonation of aliphatic sulfonates.</text>
</comment>
<comment type="catalytic activity">
    <reaction evidence="1">
        <text>an alkanesulfonate + FMNH2 + O2 = an aldehyde + FMN + sulfite + H2O + 2 H(+)</text>
        <dbReference type="Rhea" id="RHEA:23064"/>
        <dbReference type="ChEBI" id="CHEBI:15377"/>
        <dbReference type="ChEBI" id="CHEBI:15378"/>
        <dbReference type="ChEBI" id="CHEBI:15379"/>
        <dbReference type="ChEBI" id="CHEBI:17359"/>
        <dbReference type="ChEBI" id="CHEBI:17478"/>
        <dbReference type="ChEBI" id="CHEBI:57618"/>
        <dbReference type="ChEBI" id="CHEBI:58210"/>
        <dbReference type="ChEBI" id="CHEBI:134249"/>
        <dbReference type="EC" id="1.14.14.5"/>
    </reaction>
</comment>
<comment type="subunit">
    <text evidence="1">Homotetramer.</text>
</comment>
<comment type="miscellaneous">
    <text evidence="1">FMNH(2) which is absolutely required for this enzymatic reaction, is provided by SsuE.</text>
</comment>
<comment type="similarity">
    <text evidence="1">Belongs to the SsuD family.</text>
</comment>
<protein>
    <recommendedName>
        <fullName evidence="1">Alkanesulfonate monooxygenase</fullName>
        <ecNumber evidence="1">1.14.14.5</ecNumber>
    </recommendedName>
    <alternativeName>
        <fullName evidence="1">FMNH2-dependent aliphatic sulfonate monooxygenase</fullName>
    </alternativeName>
</protein>
<feature type="chain" id="PRO_1000066837" description="Alkanesulfonate monooxygenase">
    <location>
        <begin position="1"/>
        <end position="382"/>
    </location>
</feature>
<sequence>MSINVFWFLPTHGDGHYLGSSEGARAVDYSYLQQIAQAADRLGFGGVLIPTGRSCEDSWLVAASLIPVTQRLKFLVALRPGIISPTLAARQAATLDRLSNGRALFNLVTGGDPEELAAEGLHLNHTERYEASAEFTHVWRKVLEGETVDFAGKHIQVKGAKLLFPPVQHPRPPLYFGGSSAAAQDLAAEQVELYLTWGETPEQVKEKVEEVRAKAAAKGRTVRFGIRLHVIVRETTEEAWRAANRLIANLDDKTIADAQQAFARFDSVGQQRMAALHGGKKDNLEISPNLWAGVGLVRGGAGTALVGDGPTVAQRIQEYADLGIDTFVFSGYPHLEEAYRVSELLFPHLDLATTELPTQRPATQPQGEVVANIYVPQKVSQS</sequence>
<organism>
    <name type="scientific">Yersinia pseudotuberculosis serotype O:1b (strain IP 31758)</name>
    <dbReference type="NCBI Taxonomy" id="349747"/>
    <lineage>
        <taxon>Bacteria</taxon>
        <taxon>Pseudomonadati</taxon>
        <taxon>Pseudomonadota</taxon>
        <taxon>Gammaproteobacteria</taxon>
        <taxon>Enterobacterales</taxon>
        <taxon>Yersiniaceae</taxon>
        <taxon>Yersinia</taxon>
    </lineage>
</organism>
<reference key="1">
    <citation type="journal article" date="2007" name="PLoS Genet.">
        <title>The complete genome sequence of Yersinia pseudotuberculosis IP31758, the causative agent of Far East scarlet-like fever.</title>
        <authorList>
            <person name="Eppinger M."/>
            <person name="Rosovitz M.J."/>
            <person name="Fricke W.F."/>
            <person name="Rasko D.A."/>
            <person name="Kokorina G."/>
            <person name="Fayolle C."/>
            <person name="Lindler L.E."/>
            <person name="Carniel E."/>
            <person name="Ravel J."/>
        </authorList>
    </citation>
    <scope>NUCLEOTIDE SEQUENCE [LARGE SCALE GENOMIC DNA]</scope>
    <source>
        <strain>IP 31758</strain>
    </source>
</reference>
<gene>
    <name evidence="1" type="primary">ssuD</name>
    <name type="ordered locus">YpsIP31758_0354</name>
</gene>
<dbReference type="EC" id="1.14.14.5" evidence="1"/>
<dbReference type="EMBL" id="CP000720">
    <property type="protein sequence ID" value="ABS49769.1"/>
    <property type="molecule type" value="Genomic_DNA"/>
</dbReference>
<dbReference type="RefSeq" id="WP_012104377.1">
    <property type="nucleotide sequence ID" value="NC_009708.1"/>
</dbReference>
<dbReference type="SMR" id="A7FDL9"/>
<dbReference type="KEGG" id="ypi:YpsIP31758_0354"/>
<dbReference type="HOGENOM" id="CLU_027853_1_0_6"/>
<dbReference type="Proteomes" id="UP000002412">
    <property type="component" value="Chromosome"/>
</dbReference>
<dbReference type="GO" id="GO:0008726">
    <property type="term" value="F:alkanesulfonate monooxygenase activity"/>
    <property type="evidence" value="ECO:0007669"/>
    <property type="project" value="UniProtKB-UniRule"/>
</dbReference>
<dbReference type="GO" id="GO:0046306">
    <property type="term" value="P:alkanesulfonate catabolic process"/>
    <property type="evidence" value="ECO:0007669"/>
    <property type="project" value="TreeGrafter"/>
</dbReference>
<dbReference type="CDD" id="cd01094">
    <property type="entry name" value="Alkanesulfonate_monoxygenase"/>
    <property type="match status" value="1"/>
</dbReference>
<dbReference type="FunFam" id="3.20.20.30:FF:000001">
    <property type="entry name" value="Alkanesulfonate monooxygenase"/>
    <property type="match status" value="1"/>
</dbReference>
<dbReference type="Gene3D" id="3.20.20.30">
    <property type="entry name" value="Luciferase-like domain"/>
    <property type="match status" value="1"/>
</dbReference>
<dbReference type="HAMAP" id="MF_01229">
    <property type="entry name" value="Alkanesulf_monooxygen"/>
    <property type="match status" value="1"/>
</dbReference>
<dbReference type="InterPro" id="IPR019911">
    <property type="entry name" value="Alkanesulphonate_mOase_FMN-dep"/>
</dbReference>
<dbReference type="InterPro" id="IPR011251">
    <property type="entry name" value="Luciferase-like_dom"/>
</dbReference>
<dbReference type="InterPro" id="IPR036661">
    <property type="entry name" value="Luciferase-like_sf"/>
</dbReference>
<dbReference type="InterPro" id="IPR050172">
    <property type="entry name" value="SsuD_RutA_monooxygenase"/>
</dbReference>
<dbReference type="NCBIfam" id="TIGR03565">
    <property type="entry name" value="alk_sulf_monoox"/>
    <property type="match status" value="1"/>
</dbReference>
<dbReference type="NCBIfam" id="NF001939">
    <property type="entry name" value="PRK00719.1"/>
    <property type="match status" value="1"/>
</dbReference>
<dbReference type="PANTHER" id="PTHR42847">
    <property type="entry name" value="ALKANESULFONATE MONOOXYGENASE"/>
    <property type="match status" value="1"/>
</dbReference>
<dbReference type="PANTHER" id="PTHR42847:SF4">
    <property type="entry name" value="ALKANESULFONATE MONOOXYGENASE-RELATED"/>
    <property type="match status" value="1"/>
</dbReference>
<dbReference type="Pfam" id="PF00296">
    <property type="entry name" value="Bac_luciferase"/>
    <property type="match status" value="1"/>
</dbReference>
<dbReference type="SUPFAM" id="SSF51679">
    <property type="entry name" value="Bacterial luciferase-like"/>
    <property type="match status" value="1"/>
</dbReference>
<name>SSUD_YERP3</name>